<reference key="1">
    <citation type="submission" date="2007-08" db="EMBL/GenBank/DDBJ databases">
        <title>Complete sequence of Roseiflexus castenholzii DSM 13941.</title>
        <authorList>
            <consortium name="US DOE Joint Genome Institute"/>
            <person name="Copeland A."/>
            <person name="Lucas S."/>
            <person name="Lapidus A."/>
            <person name="Barry K."/>
            <person name="Glavina del Rio T."/>
            <person name="Dalin E."/>
            <person name="Tice H."/>
            <person name="Pitluck S."/>
            <person name="Thompson L.S."/>
            <person name="Brettin T."/>
            <person name="Bruce D."/>
            <person name="Detter J.C."/>
            <person name="Han C."/>
            <person name="Tapia R."/>
            <person name="Schmutz J."/>
            <person name="Larimer F."/>
            <person name="Land M."/>
            <person name="Hauser L."/>
            <person name="Kyrpides N."/>
            <person name="Mikhailova N."/>
            <person name="Bryant D.A."/>
            <person name="Hanada S."/>
            <person name="Tsukatani Y."/>
            <person name="Richardson P."/>
        </authorList>
    </citation>
    <scope>NUCLEOTIDE SEQUENCE [LARGE SCALE GENOMIC DNA]</scope>
    <source>
        <strain>DSM 13941 / HLO8</strain>
    </source>
</reference>
<protein>
    <recommendedName>
        <fullName evidence="1">Polyribonucleotide nucleotidyltransferase</fullName>
        <ecNumber evidence="1">2.7.7.8</ecNumber>
    </recommendedName>
    <alternativeName>
        <fullName evidence="1">Polynucleotide phosphorylase</fullName>
        <shortName evidence="1">PNPase</shortName>
    </alternativeName>
</protein>
<comment type="function">
    <text evidence="1">Involved in mRNA degradation. Catalyzes the phosphorolysis of single-stranded polyribonucleotides processively in the 3'- to 5'-direction.</text>
</comment>
<comment type="catalytic activity">
    <reaction evidence="1">
        <text>RNA(n+1) + phosphate = RNA(n) + a ribonucleoside 5'-diphosphate</text>
        <dbReference type="Rhea" id="RHEA:22096"/>
        <dbReference type="Rhea" id="RHEA-COMP:14527"/>
        <dbReference type="Rhea" id="RHEA-COMP:17342"/>
        <dbReference type="ChEBI" id="CHEBI:43474"/>
        <dbReference type="ChEBI" id="CHEBI:57930"/>
        <dbReference type="ChEBI" id="CHEBI:140395"/>
        <dbReference type="EC" id="2.7.7.8"/>
    </reaction>
</comment>
<comment type="cofactor">
    <cofactor evidence="1">
        <name>Mg(2+)</name>
        <dbReference type="ChEBI" id="CHEBI:18420"/>
    </cofactor>
</comment>
<comment type="subcellular location">
    <subcellularLocation>
        <location evidence="1">Cytoplasm</location>
    </subcellularLocation>
</comment>
<comment type="similarity">
    <text evidence="1">Belongs to the polyribonucleotide nucleotidyltransferase family.</text>
</comment>
<name>PNP_ROSCS</name>
<organism>
    <name type="scientific">Roseiflexus castenholzii (strain DSM 13941 / HLO8)</name>
    <dbReference type="NCBI Taxonomy" id="383372"/>
    <lineage>
        <taxon>Bacteria</taxon>
        <taxon>Bacillati</taxon>
        <taxon>Chloroflexota</taxon>
        <taxon>Chloroflexia</taxon>
        <taxon>Chloroflexales</taxon>
        <taxon>Roseiflexineae</taxon>
        <taxon>Roseiflexaceae</taxon>
        <taxon>Roseiflexus</taxon>
    </lineage>
</organism>
<proteinExistence type="inferred from homology"/>
<keyword id="KW-0963">Cytoplasm</keyword>
<keyword id="KW-0460">Magnesium</keyword>
<keyword id="KW-0479">Metal-binding</keyword>
<keyword id="KW-0548">Nucleotidyltransferase</keyword>
<keyword id="KW-1185">Reference proteome</keyword>
<keyword id="KW-0694">RNA-binding</keyword>
<keyword id="KW-0808">Transferase</keyword>
<evidence type="ECO:0000255" key="1">
    <source>
        <dbReference type="HAMAP-Rule" id="MF_01595"/>
    </source>
</evidence>
<evidence type="ECO:0000256" key="2">
    <source>
        <dbReference type="SAM" id="MobiDB-lite"/>
    </source>
</evidence>
<accession>A7NPZ1</accession>
<dbReference type="EC" id="2.7.7.8" evidence="1"/>
<dbReference type="EMBL" id="CP000804">
    <property type="protein sequence ID" value="ABU59637.1"/>
    <property type="molecule type" value="Genomic_DNA"/>
</dbReference>
<dbReference type="RefSeq" id="WP_012122060.1">
    <property type="nucleotide sequence ID" value="NC_009767.1"/>
</dbReference>
<dbReference type="SMR" id="A7NPZ1"/>
<dbReference type="STRING" id="383372.Rcas_3588"/>
<dbReference type="KEGG" id="rca:Rcas_3588"/>
<dbReference type="eggNOG" id="COG1185">
    <property type="taxonomic scope" value="Bacteria"/>
</dbReference>
<dbReference type="HOGENOM" id="CLU_004217_2_2_0"/>
<dbReference type="OrthoDB" id="9804305at2"/>
<dbReference type="Proteomes" id="UP000000263">
    <property type="component" value="Chromosome"/>
</dbReference>
<dbReference type="GO" id="GO:0005829">
    <property type="term" value="C:cytosol"/>
    <property type="evidence" value="ECO:0007669"/>
    <property type="project" value="TreeGrafter"/>
</dbReference>
<dbReference type="GO" id="GO:0000175">
    <property type="term" value="F:3'-5'-RNA exonuclease activity"/>
    <property type="evidence" value="ECO:0007669"/>
    <property type="project" value="TreeGrafter"/>
</dbReference>
<dbReference type="GO" id="GO:0000287">
    <property type="term" value="F:magnesium ion binding"/>
    <property type="evidence" value="ECO:0007669"/>
    <property type="project" value="UniProtKB-UniRule"/>
</dbReference>
<dbReference type="GO" id="GO:0004654">
    <property type="term" value="F:polyribonucleotide nucleotidyltransferase activity"/>
    <property type="evidence" value="ECO:0007669"/>
    <property type="project" value="UniProtKB-UniRule"/>
</dbReference>
<dbReference type="GO" id="GO:0003723">
    <property type="term" value="F:RNA binding"/>
    <property type="evidence" value="ECO:0007669"/>
    <property type="project" value="UniProtKB-UniRule"/>
</dbReference>
<dbReference type="GO" id="GO:0006402">
    <property type="term" value="P:mRNA catabolic process"/>
    <property type="evidence" value="ECO:0007669"/>
    <property type="project" value="UniProtKB-UniRule"/>
</dbReference>
<dbReference type="GO" id="GO:0006396">
    <property type="term" value="P:RNA processing"/>
    <property type="evidence" value="ECO:0007669"/>
    <property type="project" value="InterPro"/>
</dbReference>
<dbReference type="CDD" id="cd02393">
    <property type="entry name" value="KH-I_PNPase"/>
    <property type="match status" value="1"/>
</dbReference>
<dbReference type="CDD" id="cd11363">
    <property type="entry name" value="RNase_PH_PNPase_1"/>
    <property type="match status" value="1"/>
</dbReference>
<dbReference type="CDD" id="cd11364">
    <property type="entry name" value="RNase_PH_PNPase_2"/>
    <property type="match status" value="1"/>
</dbReference>
<dbReference type="CDD" id="cd04472">
    <property type="entry name" value="S1_PNPase"/>
    <property type="match status" value="1"/>
</dbReference>
<dbReference type="FunFam" id="3.30.1370.10:FF:000001">
    <property type="entry name" value="Polyribonucleotide nucleotidyltransferase"/>
    <property type="match status" value="1"/>
</dbReference>
<dbReference type="FunFam" id="3.30.230.70:FF:000001">
    <property type="entry name" value="Polyribonucleotide nucleotidyltransferase"/>
    <property type="match status" value="1"/>
</dbReference>
<dbReference type="FunFam" id="3.30.230.70:FF:000002">
    <property type="entry name" value="Polyribonucleotide nucleotidyltransferase"/>
    <property type="match status" value="1"/>
</dbReference>
<dbReference type="Gene3D" id="3.30.230.70">
    <property type="entry name" value="GHMP Kinase, N-terminal domain"/>
    <property type="match status" value="2"/>
</dbReference>
<dbReference type="Gene3D" id="3.30.1370.10">
    <property type="entry name" value="K Homology domain, type 1"/>
    <property type="match status" value="1"/>
</dbReference>
<dbReference type="Gene3D" id="2.40.50.140">
    <property type="entry name" value="Nucleic acid-binding proteins"/>
    <property type="match status" value="1"/>
</dbReference>
<dbReference type="HAMAP" id="MF_01595">
    <property type="entry name" value="PNPase"/>
    <property type="match status" value="1"/>
</dbReference>
<dbReference type="InterPro" id="IPR001247">
    <property type="entry name" value="ExoRNase_PH_dom1"/>
</dbReference>
<dbReference type="InterPro" id="IPR015847">
    <property type="entry name" value="ExoRNase_PH_dom2"/>
</dbReference>
<dbReference type="InterPro" id="IPR036345">
    <property type="entry name" value="ExoRNase_PH_dom2_sf"/>
</dbReference>
<dbReference type="InterPro" id="IPR004087">
    <property type="entry name" value="KH_dom"/>
</dbReference>
<dbReference type="InterPro" id="IPR004088">
    <property type="entry name" value="KH_dom_type_1"/>
</dbReference>
<dbReference type="InterPro" id="IPR036612">
    <property type="entry name" value="KH_dom_type_1_sf"/>
</dbReference>
<dbReference type="InterPro" id="IPR012340">
    <property type="entry name" value="NA-bd_OB-fold"/>
</dbReference>
<dbReference type="InterPro" id="IPR012162">
    <property type="entry name" value="PNPase"/>
</dbReference>
<dbReference type="InterPro" id="IPR027408">
    <property type="entry name" value="PNPase/RNase_PH_dom_sf"/>
</dbReference>
<dbReference type="InterPro" id="IPR015848">
    <property type="entry name" value="PNPase_PH_RNA-bd_bac/org-type"/>
</dbReference>
<dbReference type="InterPro" id="IPR036456">
    <property type="entry name" value="PNPase_PH_RNA-bd_sf"/>
</dbReference>
<dbReference type="InterPro" id="IPR020568">
    <property type="entry name" value="Ribosomal_Su5_D2-typ_SF"/>
</dbReference>
<dbReference type="InterPro" id="IPR003029">
    <property type="entry name" value="S1_domain"/>
</dbReference>
<dbReference type="NCBIfam" id="TIGR03591">
    <property type="entry name" value="polynuc_phos"/>
    <property type="match status" value="1"/>
</dbReference>
<dbReference type="NCBIfam" id="NF008805">
    <property type="entry name" value="PRK11824.1"/>
    <property type="match status" value="1"/>
</dbReference>
<dbReference type="PANTHER" id="PTHR11252">
    <property type="entry name" value="POLYRIBONUCLEOTIDE NUCLEOTIDYLTRANSFERASE"/>
    <property type="match status" value="1"/>
</dbReference>
<dbReference type="PANTHER" id="PTHR11252:SF0">
    <property type="entry name" value="POLYRIBONUCLEOTIDE NUCLEOTIDYLTRANSFERASE 1, MITOCHONDRIAL"/>
    <property type="match status" value="1"/>
</dbReference>
<dbReference type="Pfam" id="PF00013">
    <property type="entry name" value="KH_1"/>
    <property type="match status" value="1"/>
</dbReference>
<dbReference type="Pfam" id="PF03726">
    <property type="entry name" value="PNPase"/>
    <property type="match status" value="1"/>
</dbReference>
<dbReference type="Pfam" id="PF01138">
    <property type="entry name" value="RNase_PH"/>
    <property type="match status" value="2"/>
</dbReference>
<dbReference type="Pfam" id="PF03725">
    <property type="entry name" value="RNase_PH_C"/>
    <property type="match status" value="2"/>
</dbReference>
<dbReference type="Pfam" id="PF00575">
    <property type="entry name" value="S1"/>
    <property type="match status" value="1"/>
</dbReference>
<dbReference type="PIRSF" id="PIRSF005499">
    <property type="entry name" value="PNPase"/>
    <property type="match status" value="1"/>
</dbReference>
<dbReference type="SMART" id="SM00322">
    <property type="entry name" value="KH"/>
    <property type="match status" value="1"/>
</dbReference>
<dbReference type="SMART" id="SM00316">
    <property type="entry name" value="S1"/>
    <property type="match status" value="1"/>
</dbReference>
<dbReference type="SUPFAM" id="SSF54791">
    <property type="entry name" value="Eukaryotic type KH-domain (KH-domain type I)"/>
    <property type="match status" value="1"/>
</dbReference>
<dbReference type="SUPFAM" id="SSF50249">
    <property type="entry name" value="Nucleic acid-binding proteins"/>
    <property type="match status" value="1"/>
</dbReference>
<dbReference type="SUPFAM" id="SSF46915">
    <property type="entry name" value="Polynucleotide phosphorylase/guanosine pentaphosphate synthase (PNPase/GPSI), domain 3"/>
    <property type="match status" value="1"/>
</dbReference>
<dbReference type="SUPFAM" id="SSF55666">
    <property type="entry name" value="Ribonuclease PH domain 2-like"/>
    <property type="match status" value="2"/>
</dbReference>
<dbReference type="SUPFAM" id="SSF54211">
    <property type="entry name" value="Ribosomal protein S5 domain 2-like"/>
    <property type="match status" value="2"/>
</dbReference>
<dbReference type="PROSITE" id="PS50084">
    <property type="entry name" value="KH_TYPE_1"/>
    <property type="match status" value="1"/>
</dbReference>
<dbReference type="PROSITE" id="PS50126">
    <property type="entry name" value="S1"/>
    <property type="match status" value="1"/>
</dbReference>
<sequence length="746" mass="80953">MSERRIHSVSMDLAGRTLTLETGRFAEQANGAVVVRYGDTMLLATAVASKEPRTDTDFFPLTVDYEEKMYAAGKIPGSFFKREGKPTEGAILTARLTDRPLRPLFPEGYRNEVQIIVTTFSIDMVNDPAPLSIIAASAALAISDIPFLGPVGAVQVGYIDGALQINPPMPNMANSDLDLVVAGTKEAVLMVEAGANELPEEVMLEAVIQGHQVCKQICDLQNELVKLAGRPKKEFVPPPVDTSLEEAIQQWLGNRLYEAITDANKMVRDAQTEALKREVIAHFTADEPEEELEARTAAVSAAFENILYEEVRRMILERGERVDGRGPKDIRPISVEVGLIPRVHGSGLFTRGQTQVLTLATLGSPAEEQRLDDLGIETAKRYIHHYNFPPFSTGEIRRLGSPRRRDIGHGALAERSLLAVLPPKEEFPYTMRLVSETLSSNGSSSMASVCGSSLALMDAGVPIRAPVAGIAMGLITGKDGRWRVLTDIQGIEDHLGDMDFKVAGTAKGITGLQMDIKTTGITYEIMREAFAQAREGRLHVLEKMNAVISEPRKELSPYAPRIITLQINPEKIGALIGPGGKTIRSITEATGAQIDIEEDGRVYISTADAAAAQQAVAMVEALTREIKVGDIFLGKVVRIMPFGAFVNLAPGKDGMVHVSELDVGRVENVEDVIKMGDEINVMVIGIEPGTGKVSLSRRALLTGETAEDRRAAGAGRGLRDGGRSSGSERSGDRSPRSDDRPRPRRR</sequence>
<gene>
    <name evidence="1" type="primary">pnp</name>
    <name type="ordered locus">Rcas_3588</name>
</gene>
<feature type="chain" id="PRO_0000381916" description="Polyribonucleotide nucleotidyltransferase">
    <location>
        <begin position="1"/>
        <end position="746"/>
    </location>
</feature>
<feature type="domain" description="KH" evidence="1">
    <location>
        <begin position="560"/>
        <end position="619"/>
    </location>
</feature>
<feature type="domain" description="S1 motif" evidence="1">
    <location>
        <begin position="629"/>
        <end position="698"/>
    </location>
</feature>
<feature type="region of interest" description="Disordered" evidence="2">
    <location>
        <begin position="704"/>
        <end position="746"/>
    </location>
</feature>
<feature type="compositionally biased region" description="Basic and acidic residues" evidence="2">
    <location>
        <begin position="706"/>
        <end position="722"/>
    </location>
</feature>
<feature type="compositionally biased region" description="Basic and acidic residues" evidence="2">
    <location>
        <begin position="729"/>
        <end position="746"/>
    </location>
</feature>
<feature type="binding site" evidence="1">
    <location>
        <position position="493"/>
    </location>
    <ligand>
        <name>Mg(2+)</name>
        <dbReference type="ChEBI" id="CHEBI:18420"/>
    </ligand>
</feature>
<feature type="binding site" evidence="1">
    <location>
        <position position="499"/>
    </location>
    <ligand>
        <name>Mg(2+)</name>
        <dbReference type="ChEBI" id="CHEBI:18420"/>
    </ligand>
</feature>